<keyword id="KW-0007">Acetylation</keyword>
<keyword id="KW-1185">Reference proteome</keyword>
<reference key="1">
    <citation type="journal article" date="2005" name="Science">
        <title>The transcriptional landscape of the mammalian genome.</title>
        <authorList>
            <person name="Carninci P."/>
            <person name="Kasukawa T."/>
            <person name="Katayama S."/>
            <person name="Gough J."/>
            <person name="Frith M.C."/>
            <person name="Maeda N."/>
            <person name="Oyama R."/>
            <person name="Ravasi T."/>
            <person name="Lenhard B."/>
            <person name="Wells C."/>
            <person name="Kodzius R."/>
            <person name="Shimokawa K."/>
            <person name="Bajic V.B."/>
            <person name="Brenner S.E."/>
            <person name="Batalov S."/>
            <person name="Forrest A.R."/>
            <person name="Zavolan M."/>
            <person name="Davis M.J."/>
            <person name="Wilming L.G."/>
            <person name="Aidinis V."/>
            <person name="Allen J.E."/>
            <person name="Ambesi-Impiombato A."/>
            <person name="Apweiler R."/>
            <person name="Aturaliya R.N."/>
            <person name="Bailey T.L."/>
            <person name="Bansal M."/>
            <person name="Baxter L."/>
            <person name="Beisel K.W."/>
            <person name="Bersano T."/>
            <person name="Bono H."/>
            <person name="Chalk A.M."/>
            <person name="Chiu K.P."/>
            <person name="Choudhary V."/>
            <person name="Christoffels A."/>
            <person name="Clutterbuck D.R."/>
            <person name="Crowe M.L."/>
            <person name="Dalla E."/>
            <person name="Dalrymple B.P."/>
            <person name="de Bono B."/>
            <person name="Della Gatta G."/>
            <person name="di Bernardo D."/>
            <person name="Down T."/>
            <person name="Engstrom P."/>
            <person name="Fagiolini M."/>
            <person name="Faulkner G."/>
            <person name="Fletcher C.F."/>
            <person name="Fukushima T."/>
            <person name="Furuno M."/>
            <person name="Futaki S."/>
            <person name="Gariboldi M."/>
            <person name="Georgii-Hemming P."/>
            <person name="Gingeras T.R."/>
            <person name="Gojobori T."/>
            <person name="Green R.E."/>
            <person name="Gustincich S."/>
            <person name="Harbers M."/>
            <person name="Hayashi Y."/>
            <person name="Hensch T.K."/>
            <person name="Hirokawa N."/>
            <person name="Hill D."/>
            <person name="Huminiecki L."/>
            <person name="Iacono M."/>
            <person name="Ikeo K."/>
            <person name="Iwama A."/>
            <person name="Ishikawa T."/>
            <person name="Jakt M."/>
            <person name="Kanapin A."/>
            <person name="Katoh M."/>
            <person name="Kawasawa Y."/>
            <person name="Kelso J."/>
            <person name="Kitamura H."/>
            <person name="Kitano H."/>
            <person name="Kollias G."/>
            <person name="Krishnan S.P."/>
            <person name="Kruger A."/>
            <person name="Kummerfeld S.K."/>
            <person name="Kurochkin I.V."/>
            <person name="Lareau L.F."/>
            <person name="Lazarevic D."/>
            <person name="Lipovich L."/>
            <person name="Liu J."/>
            <person name="Liuni S."/>
            <person name="McWilliam S."/>
            <person name="Madan Babu M."/>
            <person name="Madera M."/>
            <person name="Marchionni L."/>
            <person name="Matsuda H."/>
            <person name="Matsuzawa S."/>
            <person name="Miki H."/>
            <person name="Mignone F."/>
            <person name="Miyake S."/>
            <person name="Morris K."/>
            <person name="Mottagui-Tabar S."/>
            <person name="Mulder N."/>
            <person name="Nakano N."/>
            <person name="Nakauchi H."/>
            <person name="Ng P."/>
            <person name="Nilsson R."/>
            <person name="Nishiguchi S."/>
            <person name="Nishikawa S."/>
            <person name="Nori F."/>
            <person name="Ohara O."/>
            <person name="Okazaki Y."/>
            <person name="Orlando V."/>
            <person name="Pang K.C."/>
            <person name="Pavan W.J."/>
            <person name="Pavesi G."/>
            <person name="Pesole G."/>
            <person name="Petrovsky N."/>
            <person name="Piazza S."/>
            <person name="Reed J."/>
            <person name="Reid J.F."/>
            <person name="Ring B.Z."/>
            <person name="Ringwald M."/>
            <person name="Rost B."/>
            <person name="Ruan Y."/>
            <person name="Salzberg S.L."/>
            <person name="Sandelin A."/>
            <person name="Schneider C."/>
            <person name="Schoenbach C."/>
            <person name="Sekiguchi K."/>
            <person name="Semple C.A."/>
            <person name="Seno S."/>
            <person name="Sessa L."/>
            <person name="Sheng Y."/>
            <person name="Shibata Y."/>
            <person name="Shimada H."/>
            <person name="Shimada K."/>
            <person name="Silva D."/>
            <person name="Sinclair B."/>
            <person name="Sperling S."/>
            <person name="Stupka E."/>
            <person name="Sugiura K."/>
            <person name="Sultana R."/>
            <person name="Takenaka Y."/>
            <person name="Taki K."/>
            <person name="Tammoja K."/>
            <person name="Tan S.L."/>
            <person name="Tang S."/>
            <person name="Taylor M.S."/>
            <person name="Tegner J."/>
            <person name="Teichmann S.A."/>
            <person name="Ueda H.R."/>
            <person name="van Nimwegen E."/>
            <person name="Verardo R."/>
            <person name="Wei C.L."/>
            <person name="Yagi K."/>
            <person name="Yamanishi H."/>
            <person name="Zabarovsky E."/>
            <person name="Zhu S."/>
            <person name="Zimmer A."/>
            <person name="Hide W."/>
            <person name="Bult C."/>
            <person name="Grimmond S.M."/>
            <person name="Teasdale R.D."/>
            <person name="Liu E.T."/>
            <person name="Brusic V."/>
            <person name="Quackenbush J."/>
            <person name="Wahlestedt C."/>
            <person name="Mattick J.S."/>
            <person name="Hume D.A."/>
            <person name="Kai C."/>
            <person name="Sasaki D."/>
            <person name="Tomaru Y."/>
            <person name="Fukuda S."/>
            <person name="Kanamori-Katayama M."/>
            <person name="Suzuki M."/>
            <person name="Aoki J."/>
            <person name="Arakawa T."/>
            <person name="Iida J."/>
            <person name="Imamura K."/>
            <person name="Itoh M."/>
            <person name="Kato T."/>
            <person name="Kawaji H."/>
            <person name="Kawagashira N."/>
            <person name="Kawashima T."/>
            <person name="Kojima M."/>
            <person name="Kondo S."/>
            <person name="Konno H."/>
            <person name="Nakano K."/>
            <person name="Ninomiya N."/>
            <person name="Nishio T."/>
            <person name="Okada M."/>
            <person name="Plessy C."/>
            <person name="Shibata K."/>
            <person name="Shiraki T."/>
            <person name="Suzuki S."/>
            <person name="Tagami M."/>
            <person name="Waki K."/>
            <person name="Watahiki A."/>
            <person name="Okamura-Oho Y."/>
            <person name="Suzuki H."/>
            <person name="Kawai J."/>
            <person name="Hayashizaki Y."/>
        </authorList>
    </citation>
    <scope>NUCLEOTIDE SEQUENCE [LARGE SCALE MRNA]</scope>
    <source>
        <strain>C57BL/6J</strain>
        <tissue>Embryo</tissue>
        <tissue>Lung</tissue>
    </source>
</reference>
<reference key="2">
    <citation type="journal article" date="2009" name="PLoS Biol.">
        <title>Lineage-specific biology revealed by a finished genome assembly of the mouse.</title>
        <authorList>
            <person name="Church D.M."/>
            <person name="Goodstadt L."/>
            <person name="Hillier L.W."/>
            <person name="Zody M.C."/>
            <person name="Goldstein S."/>
            <person name="She X."/>
            <person name="Bult C.J."/>
            <person name="Agarwala R."/>
            <person name="Cherry J.L."/>
            <person name="DiCuccio M."/>
            <person name="Hlavina W."/>
            <person name="Kapustin Y."/>
            <person name="Meric P."/>
            <person name="Maglott D."/>
            <person name="Birtle Z."/>
            <person name="Marques A.C."/>
            <person name="Graves T."/>
            <person name="Zhou S."/>
            <person name="Teague B."/>
            <person name="Potamousis K."/>
            <person name="Churas C."/>
            <person name="Place M."/>
            <person name="Herschleb J."/>
            <person name="Runnheim R."/>
            <person name="Forrest D."/>
            <person name="Amos-Landgraf J."/>
            <person name="Schwartz D.C."/>
            <person name="Cheng Z."/>
            <person name="Lindblad-Toh K."/>
            <person name="Eichler E.E."/>
            <person name="Ponting C.P."/>
        </authorList>
    </citation>
    <scope>NUCLEOTIDE SEQUENCE [LARGE SCALE GENOMIC DNA]</scope>
    <source>
        <strain>C57BL/6J</strain>
    </source>
</reference>
<gene>
    <name type="primary">Ubald2</name>
    <name type="synonym">Fam100b</name>
</gene>
<feature type="initiator methionine" description="Removed" evidence="1">
    <location>
        <position position="1"/>
    </location>
</feature>
<feature type="chain" id="PRO_0000239029" description="UBA-like domain-containing protein 2">
    <location>
        <begin position="2"/>
        <end position="164"/>
    </location>
</feature>
<feature type="region of interest" description="Disordered" evidence="2">
    <location>
        <begin position="144"/>
        <end position="164"/>
    </location>
</feature>
<feature type="modified residue" description="N-acetylserine" evidence="1">
    <location>
        <position position="2"/>
    </location>
</feature>
<accession>Q8BQH4</accession>
<accession>A2AAP1</accession>
<accession>Q3UMH5</accession>
<organism>
    <name type="scientific">Mus musculus</name>
    <name type="common">Mouse</name>
    <dbReference type="NCBI Taxonomy" id="10090"/>
    <lineage>
        <taxon>Eukaryota</taxon>
        <taxon>Metazoa</taxon>
        <taxon>Chordata</taxon>
        <taxon>Craniata</taxon>
        <taxon>Vertebrata</taxon>
        <taxon>Euteleostomi</taxon>
        <taxon>Mammalia</taxon>
        <taxon>Eutheria</taxon>
        <taxon>Euarchontoglires</taxon>
        <taxon>Glires</taxon>
        <taxon>Rodentia</taxon>
        <taxon>Myomorpha</taxon>
        <taxon>Muroidea</taxon>
        <taxon>Muridae</taxon>
        <taxon>Murinae</taxon>
        <taxon>Mus</taxon>
        <taxon>Mus</taxon>
    </lineage>
</organism>
<comment type="similarity">
    <text evidence="3">Belongs to the UBALD family.</text>
</comment>
<comment type="sequence caution" evidence="3">
    <conflict type="erroneous initiation">
        <sequence resource="EMBL-CDS" id="BAE26123"/>
    </conflict>
    <text>Truncated N-terminus.</text>
</comment>
<name>UBAD2_MOUSE</name>
<protein>
    <recommendedName>
        <fullName>UBA-like domain-containing protein 2</fullName>
    </recommendedName>
</protein>
<sequence length="164" mass="17671">MSVNTDELRHQVMINQFVLAAGCAADQAQQLLQAAHWQFETALSTFFQESNIPNSHHHPQMMCTPSNTPATPPNFPDALAMFSKLRTSEGLQSSSSSPMAAVACSPPANFSPFWAASPPNHQVPWIPPSSPNTFHLHCPQPTWPPGASQGGAPQKAMAAMDGQR</sequence>
<evidence type="ECO:0000250" key="1">
    <source>
        <dbReference type="UniProtKB" id="Q8IYN6"/>
    </source>
</evidence>
<evidence type="ECO:0000256" key="2">
    <source>
        <dbReference type="SAM" id="MobiDB-lite"/>
    </source>
</evidence>
<evidence type="ECO:0000305" key="3"/>
<dbReference type="EMBL" id="AK050732">
    <property type="protein sequence ID" value="BAC34396.1"/>
    <property type="molecule type" value="mRNA"/>
</dbReference>
<dbReference type="EMBL" id="AK144901">
    <property type="protein sequence ID" value="BAE26123.1"/>
    <property type="status" value="ALT_INIT"/>
    <property type="molecule type" value="mRNA"/>
</dbReference>
<dbReference type="EMBL" id="AL645861">
    <property type="status" value="NOT_ANNOTATED_CDS"/>
    <property type="molecule type" value="Genomic_DNA"/>
</dbReference>
<dbReference type="CCDS" id="CCDS25666.1"/>
<dbReference type="RefSeq" id="NP_795876.1">
    <property type="nucleotide sequence ID" value="NM_176902.3"/>
</dbReference>
<dbReference type="SMR" id="Q8BQH4"/>
<dbReference type="FunCoup" id="Q8BQH4">
    <property type="interactions" value="3"/>
</dbReference>
<dbReference type="STRING" id="10090.ENSMUSP00000058894"/>
<dbReference type="GlyGen" id="Q8BQH4">
    <property type="glycosylation" value="1 site"/>
</dbReference>
<dbReference type="PhosphoSitePlus" id="Q8BQH4"/>
<dbReference type="PaxDb" id="10090-ENSMUSP00000058894"/>
<dbReference type="ProteomicsDB" id="298402"/>
<dbReference type="Pumba" id="Q8BQH4"/>
<dbReference type="Antibodypedia" id="19681">
    <property type="antibodies" value="10 antibodies from 7 providers"/>
</dbReference>
<dbReference type="DNASU" id="319370"/>
<dbReference type="Ensembl" id="ENSMUST00000057676.7">
    <property type="protein sequence ID" value="ENSMUSP00000058894.7"/>
    <property type="gene ID" value="ENSMUSG00000050628.7"/>
</dbReference>
<dbReference type="GeneID" id="319370"/>
<dbReference type="KEGG" id="mmu:319370"/>
<dbReference type="UCSC" id="uc007mlb.1">
    <property type="organism name" value="mouse"/>
</dbReference>
<dbReference type="AGR" id="MGI:1914635"/>
<dbReference type="CTD" id="283991"/>
<dbReference type="MGI" id="MGI:1914635">
    <property type="gene designation" value="Ubald2"/>
</dbReference>
<dbReference type="VEuPathDB" id="HostDB:ENSMUSG00000050628"/>
<dbReference type="eggNOG" id="ENOG502S43S">
    <property type="taxonomic scope" value="Eukaryota"/>
</dbReference>
<dbReference type="GeneTree" id="ENSGT00390000008825"/>
<dbReference type="HOGENOM" id="CLU_108623_0_1_1"/>
<dbReference type="InParanoid" id="Q8BQH4"/>
<dbReference type="OMA" id="HRLHCPQ"/>
<dbReference type="OrthoDB" id="6093553at2759"/>
<dbReference type="PhylomeDB" id="Q8BQH4"/>
<dbReference type="TreeFam" id="TF329433"/>
<dbReference type="BioGRID-ORCS" id="319370">
    <property type="hits" value="6 hits in 75 CRISPR screens"/>
</dbReference>
<dbReference type="ChiTaRS" id="Ubald2">
    <property type="organism name" value="mouse"/>
</dbReference>
<dbReference type="PRO" id="PR:Q8BQH4"/>
<dbReference type="Proteomes" id="UP000000589">
    <property type="component" value="Chromosome 11"/>
</dbReference>
<dbReference type="RNAct" id="Q8BQH4">
    <property type="molecule type" value="protein"/>
</dbReference>
<dbReference type="Bgee" id="ENSMUSG00000050628">
    <property type="expression patterns" value="Expressed in bone marrow and 67 other cell types or tissues"/>
</dbReference>
<dbReference type="CDD" id="cd14343">
    <property type="entry name" value="UBA_F100B_like"/>
    <property type="match status" value="1"/>
</dbReference>
<dbReference type="Gene3D" id="1.10.8.10">
    <property type="entry name" value="DNA helicase RuvA subunit, C-terminal domain"/>
    <property type="match status" value="1"/>
</dbReference>
<dbReference type="InterPro" id="IPR009060">
    <property type="entry name" value="UBA-like_sf"/>
</dbReference>
<dbReference type="InterPro" id="IPR054109">
    <property type="entry name" value="UBA_8"/>
</dbReference>
<dbReference type="InterPro" id="IPR039310">
    <property type="entry name" value="UBALD1/2"/>
</dbReference>
<dbReference type="PANTHER" id="PTHR31993">
    <property type="entry name" value="UBA-LIKE DOMAIN-CONTAINING PROTEIN 2"/>
    <property type="match status" value="1"/>
</dbReference>
<dbReference type="PANTHER" id="PTHR31993:SF6">
    <property type="entry name" value="UBA-LIKE DOMAIN-CONTAINING PROTEIN 2"/>
    <property type="match status" value="1"/>
</dbReference>
<dbReference type="Pfam" id="PF22566">
    <property type="entry name" value="UBA_8"/>
    <property type="match status" value="1"/>
</dbReference>
<dbReference type="SUPFAM" id="SSF46934">
    <property type="entry name" value="UBA-like"/>
    <property type="match status" value="1"/>
</dbReference>
<proteinExistence type="evidence at transcript level"/>